<proteinExistence type="evidence at protein level"/>
<name>FOMT1_OCIBA</name>
<gene>
    <name evidence="5" type="primary">FOMT1</name>
</gene>
<keyword id="KW-0489">Methyltransferase</keyword>
<keyword id="KW-0949">S-adenosyl-L-methionine</keyword>
<keyword id="KW-0808">Transferase</keyword>
<evidence type="ECO:0000250" key="1">
    <source>
        <dbReference type="UniProtKB" id="Q7XB10"/>
    </source>
</evidence>
<evidence type="ECO:0000255" key="2">
    <source>
        <dbReference type="PROSITE-ProRule" id="PRU01020"/>
    </source>
</evidence>
<evidence type="ECO:0000269" key="3">
    <source>
    </source>
</evidence>
<evidence type="ECO:0000269" key="4">
    <source>
    </source>
</evidence>
<evidence type="ECO:0000303" key="5">
    <source>
    </source>
</evidence>
<evidence type="ECO:0000303" key="6">
    <source>
    </source>
</evidence>
<evidence type="ECO:0000305" key="7">
    <source>
    </source>
</evidence>
<comment type="function">
    <text evidence="3">Flavonoid 7-O-methyltransferase involved in the biosynthesis of polymethoxylated flavonoids natural products such as nevadensin and salvigenin, aroma compounds which contribute to the flavor of sweet basil, and exhibit pharmacological activities such as anti-allergic, anti-oxidant, antibacterial, anti-proliferative, and anti-inflammatory effects (PubMed:22923679). Catalyzes S-adenosylmethionine-dependent regioselective 7-O-methylation of flavonoids; active on various hydroxylated flavonoid substrates, including apigenin (API) and luteolin (LUT), and, with a lower efficiency, scutellarein (SCU), naringenin (NAR), chrysoeriol (CHRYS), diosmetin (DIOS), acacetin (ACA) and scutellarein-7-methyl ether (SCU7Me) (PubMed:22923679).</text>
</comment>
<comment type="catalytic activity">
    <reaction evidence="3">
        <text>(2S)-naringenin + S-adenosyl-L-methionine = (2S)-sakuranetin + S-adenosyl-L-homocysteine + H(+)</text>
        <dbReference type="Rhea" id="RHEA:31539"/>
        <dbReference type="ChEBI" id="CHEBI:15378"/>
        <dbReference type="ChEBI" id="CHEBI:17846"/>
        <dbReference type="ChEBI" id="CHEBI:28927"/>
        <dbReference type="ChEBI" id="CHEBI:57856"/>
        <dbReference type="ChEBI" id="CHEBI:59789"/>
        <dbReference type="EC" id="2.1.1.232"/>
    </reaction>
    <physiologicalReaction direction="left-to-right" evidence="7">
        <dbReference type="Rhea" id="RHEA:31540"/>
    </physiologicalReaction>
</comment>
<comment type="catalytic activity">
    <reaction evidence="3">
        <text>scutellarein + S-adenosyl-L-methionine = scutellarein 7-methyl ether + S-adenosyl-L-homocysteine</text>
        <dbReference type="Rhea" id="RHEA:73079"/>
        <dbReference type="ChEBI" id="CHEBI:57856"/>
        <dbReference type="ChEBI" id="CHEBI:59789"/>
        <dbReference type="ChEBI" id="CHEBI:78328"/>
        <dbReference type="ChEBI" id="CHEBI:192701"/>
    </reaction>
    <physiologicalReaction direction="left-to-right" evidence="7">
        <dbReference type="Rhea" id="RHEA:73080"/>
    </physiologicalReaction>
</comment>
<comment type="catalytic activity">
    <reaction evidence="3">
        <text>apigenin + S-adenosyl-L-methionine = genkwanin + S-adenosyl-L-homocysteine + H(+)</text>
        <dbReference type="Rhea" id="RHEA:73071"/>
        <dbReference type="ChEBI" id="CHEBI:15378"/>
        <dbReference type="ChEBI" id="CHEBI:57856"/>
        <dbReference type="ChEBI" id="CHEBI:58470"/>
        <dbReference type="ChEBI" id="CHEBI:59789"/>
        <dbReference type="ChEBI" id="CHEBI:192700"/>
    </reaction>
    <physiologicalReaction direction="left-to-right" evidence="7">
        <dbReference type="Rhea" id="RHEA:73072"/>
    </physiologicalReaction>
</comment>
<comment type="catalytic activity">
    <reaction evidence="3">
        <text>luteolin + S-adenosyl-L-methionine = luteolin 7-methyl ether + S-adenosyl-L-homocysteine + H(+)</text>
        <dbReference type="Rhea" id="RHEA:73075"/>
        <dbReference type="ChEBI" id="CHEBI:15378"/>
        <dbReference type="ChEBI" id="CHEBI:57545"/>
        <dbReference type="ChEBI" id="CHEBI:57856"/>
        <dbReference type="ChEBI" id="CHEBI:59789"/>
        <dbReference type="ChEBI" id="CHEBI:192705"/>
    </reaction>
    <physiologicalReaction direction="left-to-right" evidence="7">
        <dbReference type="Rhea" id="RHEA:73076"/>
    </physiologicalReaction>
</comment>
<comment type="catalytic activity">
    <reaction evidence="3">
        <text>chrysoeriol + S-adenosyl-L-methionine = velutin + S-adenosyl-L-homocysteine</text>
        <dbReference type="Rhea" id="RHEA:73083"/>
        <dbReference type="ChEBI" id="CHEBI:57799"/>
        <dbReference type="ChEBI" id="CHEBI:57856"/>
        <dbReference type="ChEBI" id="CHEBI:59789"/>
        <dbReference type="ChEBI" id="CHEBI:177047"/>
    </reaction>
    <physiologicalReaction direction="left-to-right" evidence="7">
        <dbReference type="Rhea" id="RHEA:73084"/>
    </physiologicalReaction>
</comment>
<comment type="catalytic activity">
    <reaction evidence="3">
        <text>diosmetin + S-adenosyl-L-methionine = luteolin 4',7-dimethyl ether + S-adenosyl-L-homocysteine</text>
        <dbReference type="Rhea" id="RHEA:73103"/>
        <dbReference type="ChEBI" id="CHEBI:57856"/>
        <dbReference type="ChEBI" id="CHEBI:59789"/>
        <dbReference type="ChEBI" id="CHEBI:192749"/>
        <dbReference type="ChEBI" id="CHEBI:192751"/>
    </reaction>
    <physiologicalReaction direction="left-to-right" evidence="7">
        <dbReference type="Rhea" id="RHEA:73104"/>
    </physiologicalReaction>
</comment>
<comment type="catalytic activity">
    <reaction evidence="3">
        <text>acacetin + S-adenosyl-L-methionine = apigenin 4',7-dimethyl ether + S-adenosyl-L-homocysteine</text>
        <dbReference type="Rhea" id="RHEA:73107"/>
        <dbReference type="ChEBI" id="CHEBI:2769"/>
        <dbReference type="ChEBI" id="CHEBI:57284"/>
        <dbReference type="ChEBI" id="CHEBI:57856"/>
        <dbReference type="ChEBI" id="CHEBI:59789"/>
    </reaction>
    <physiologicalReaction direction="left-to-right" evidence="7">
        <dbReference type="Rhea" id="RHEA:73108"/>
    </physiologicalReaction>
</comment>
<comment type="catalytic activity">
    <reaction evidence="3">
        <text>scutellarein 4'-methyl ether + S-adenosyl-L-methionine = ladanein + S-adenosyl-L-homocysteine</text>
        <dbReference type="Rhea" id="RHEA:73111"/>
        <dbReference type="ChEBI" id="CHEBI:57856"/>
        <dbReference type="ChEBI" id="CHEBI:59789"/>
        <dbReference type="ChEBI" id="CHEBI:192702"/>
        <dbReference type="ChEBI" id="CHEBI:192755"/>
    </reaction>
    <physiologicalReaction direction="left-to-right" evidence="7">
        <dbReference type="Rhea" id="RHEA:73112"/>
    </physiologicalReaction>
</comment>
<comment type="biophysicochemical properties">
    <kinetics>
        <KM evidence="3">32 nM for apigenin (in the presence of S-adenosyl-L-methionine)</KM>
        <KM evidence="3">240 nM for luteolin (in the presence of S-adenosyl-L-methionine)</KM>
        <KM evidence="3">580 nM for scutellarein (in the presence of S-adenosyl-L-methionine)</KM>
        <KM evidence="3">2.5 uM for S-adenosyl-L-methionine (in the presence of apigenin)</KM>
        <text evidence="3">kcat is 91x10(-3) sec(-1) with apigenin as substrate (in the presence of S-adenosyl-L-methionine) (PubMed:22923679). kcat is 100x10(-3) sec(-1) with luteolin as substrate (in the presence of S-adenosyl-L-methionine) (PubMed:22923679). kcat is 47x10(-3) sec(-1) with scutellarein as substrate (in the presence of S-adenosyl-L-methionine) (PubMed:22923679).</text>
    </kinetics>
</comment>
<comment type="pathway">
    <text evidence="6">Flavonoid metabolism.</text>
</comment>
<comment type="subunit">
    <text evidence="1">Homodimer.</text>
</comment>
<comment type="tissue specificity">
    <text evidence="3">Expressed in leaves.</text>
</comment>
<comment type="developmental stage">
    <text evidence="3">Accumulates in young leaves but fades out during leaves aging.</text>
</comment>
<comment type="biotechnology">
    <text evidence="4">Nevadensin is a selective inhibitor of human carboxylesterase 1 (hCE-1), a key enzyme responsible for the hydrolysis of a wide range of endogenous and xenobiotic esters.</text>
</comment>
<comment type="similarity">
    <text evidence="2">Belongs to the class I-like SAM-binding methyltransferase superfamily. Cation-independent O-methyltransferase family.</text>
</comment>
<feature type="chain" id="PRO_0000456914" description="Flavonoid 7-O-methyltransferase 1">
    <location>
        <begin position="1"/>
        <end position="340"/>
    </location>
</feature>
<feature type="active site" description="Proton acceptor" evidence="2">
    <location>
        <position position="245"/>
    </location>
</feature>
<feature type="binding site" evidence="2">
    <location>
        <position position="207"/>
    </location>
    <ligand>
        <name>S-adenosyl-L-methionine</name>
        <dbReference type="ChEBI" id="CHEBI:59789"/>
    </ligand>
</feature>
<protein>
    <recommendedName>
        <fullName evidence="5">Flavonoid 7-O-methyltransferase 1</fullName>
        <shortName evidence="5">ObFOMT1</shortName>
        <ecNumber evidence="2 3">2.1.1.-</ecNumber>
    </recommendedName>
    <alternativeName>
        <fullName evidence="7">4'-methylscutellarein 7-O-methyltransferase</fullName>
        <ecNumber evidence="3">2.1.1.-</ecNumber>
    </alternativeName>
    <alternativeName>
        <fullName evidence="7">Acacetin 7-O-methyltransferase</fullName>
        <ecNumber evidence="3">2.1.1.-</ecNumber>
    </alternativeName>
    <alternativeName>
        <fullName evidence="7">Apigenin 7-O-methyltransferase</fullName>
        <ecNumber evidence="3">2.1.1.-</ecNumber>
    </alternativeName>
    <alternativeName>
        <fullName evidence="7">Chrysoeriol 7-O-methyltransferase</fullName>
        <ecNumber evidence="3">2.1.1.-</ecNumber>
    </alternativeName>
    <alternativeName>
        <fullName evidence="7">Diosmetin 7-O-methyltransferase</fullName>
        <ecNumber evidence="3">2.1.1.-</ecNumber>
    </alternativeName>
    <alternativeName>
        <fullName evidence="7">Luteolin 7-O-methyltransferase</fullName>
        <ecNumber evidence="3">2.1.1.-</ecNumber>
    </alternativeName>
    <alternativeName>
        <fullName evidence="7">Naringenin 7-O-methyltransferase</fullName>
        <ecNumber evidence="3">2.1.1.232</ecNumber>
    </alternativeName>
    <alternativeName>
        <fullName evidence="7">Scutellarein 7-O-methyltransferase</fullName>
        <ecNumber evidence="3">2.1.1.-</ecNumber>
    </alternativeName>
</protein>
<sequence length="340" mass="37182">MGRDEEAAAQAEAWNHGFGFIKTSVIKTAIELEIPDILHNQGGPLSLSALSSAVGVPPDRLHRIMRFLAHHGVSKKTASPPGESDYYYAETAVSRSLTKDNLGPFVLLQGAQRGPSACITAQGLKSRERPGVEELGSDPLYEDPIFTEKVFRDAMTCHARVTTSAVIENYGEGFRGVGSLVDVGGSYGMTLGMLVEAFPWIRGICYDLPPVVAKAKPLHGVEFVAGSMFESVPKADVIMLMFVLHNWSDNECIDILKRCKEAIPAETGRLMIIDAIIDEDGEGDEFAGARLGLDVTMMAVTYEGKERTHREWAYILTEAGFRKYVVNNIKALESLIEAYP</sequence>
<organism>
    <name type="scientific">Ocimum basilicum</name>
    <name type="common">Sweet basil</name>
    <dbReference type="NCBI Taxonomy" id="39350"/>
    <lineage>
        <taxon>Eukaryota</taxon>
        <taxon>Viridiplantae</taxon>
        <taxon>Streptophyta</taxon>
        <taxon>Embryophyta</taxon>
        <taxon>Tracheophyta</taxon>
        <taxon>Spermatophyta</taxon>
        <taxon>Magnoliopsida</taxon>
        <taxon>eudicotyledons</taxon>
        <taxon>Gunneridae</taxon>
        <taxon>Pentapetalae</taxon>
        <taxon>asterids</taxon>
        <taxon>lamiids</taxon>
        <taxon>Lamiales</taxon>
        <taxon>Lamiaceae</taxon>
        <taxon>Nepetoideae</taxon>
        <taxon>Ocimeae</taxon>
        <taxon>Ociminae</taxon>
        <taxon>Ocimum</taxon>
    </lineage>
</organism>
<reference key="1">
    <citation type="journal article" date="2012" name="Plant Physiol.">
        <title>A set of regioselective O-methyltransferases gives rise to the complex pattern of methoxylated flavones in sweet basil.</title>
        <authorList>
            <person name="Berim A."/>
            <person name="Hyatt D.C."/>
            <person name="Gang D.R."/>
        </authorList>
    </citation>
    <scope>NUCLEOTIDE SEQUENCE [MRNA]</scope>
    <scope>FUNCTION</scope>
    <scope>CATALYTIC ACTIVITY</scope>
    <scope>BIOPHYSICOCHEMICAL PROPERTIES</scope>
    <scope>TISSUE SPECIFICITY</scope>
    <scope>DEVELOPMENTAL STAGE</scope>
    <source>
        <strain>cv. EMX-1</strain>
        <strain>cv. SD</strain>
        <tissue>Peltate glandular trichome</tissue>
    </source>
</reference>
<reference key="2">
    <citation type="journal article" date="2018" name="Int. J. Biol. Macromol.">
        <title>Nevadensin is a naturally occurring selective inhibitor of human carboxylesterase 1.</title>
        <authorList>
            <person name="Wang Y.-Q."/>
            <person name="Weng Z.-M."/>
            <person name="Dou T.-Y."/>
            <person name="Hou J."/>
            <person name="Wang D.-D."/>
            <person name="Ding L.-L."/>
            <person name="Zou L.-W."/>
            <person name="Yu Y."/>
            <person name="Chen J."/>
            <person name="Tang H."/>
            <person name="Ge G.-B."/>
        </authorList>
    </citation>
    <scope>BIOTECHNOLOGY</scope>
</reference>
<reference key="3">
    <citation type="journal article" date="2019" name="Nat. Prod. Rep.">
        <title>Non-volatile natural products in plant glandular trichomes: chemistry, biological activities and biosynthesis.</title>
        <authorList>
            <person name="Liu Y."/>
            <person name="Jing S.-X."/>
            <person name="Luo S.-H."/>
            <person name="Li S.-H."/>
        </authorList>
    </citation>
    <scope>PATHWAY</scope>
    <scope>REVIEW</scope>
</reference>
<accession>K0I977</accession>
<dbReference type="EC" id="2.1.1.-" evidence="2 3"/>
<dbReference type="EC" id="2.1.1.232" evidence="3"/>
<dbReference type="EMBL" id="JQ653275">
    <property type="protein sequence ID" value="AFU50295.1"/>
    <property type="molecule type" value="mRNA"/>
</dbReference>
<dbReference type="SMR" id="K0I977"/>
<dbReference type="BioCyc" id="MetaCyc:MONOMER-18656"/>
<dbReference type="BRENDA" id="2.1.1.B74">
    <property type="organism ID" value="4385"/>
</dbReference>
<dbReference type="GO" id="GO:0008171">
    <property type="term" value="F:O-methyltransferase activity"/>
    <property type="evidence" value="ECO:0007669"/>
    <property type="project" value="InterPro"/>
</dbReference>
<dbReference type="GO" id="GO:0046983">
    <property type="term" value="F:protein dimerization activity"/>
    <property type="evidence" value="ECO:0007669"/>
    <property type="project" value="InterPro"/>
</dbReference>
<dbReference type="GO" id="GO:0032259">
    <property type="term" value="P:methylation"/>
    <property type="evidence" value="ECO:0007669"/>
    <property type="project" value="UniProtKB-KW"/>
</dbReference>
<dbReference type="Gene3D" id="3.40.50.150">
    <property type="entry name" value="Vaccinia Virus protein VP39"/>
    <property type="match status" value="1"/>
</dbReference>
<dbReference type="Gene3D" id="1.10.10.10">
    <property type="entry name" value="Winged helix-like DNA-binding domain superfamily/Winged helix DNA-binding domain"/>
    <property type="match status" value="1"/>
</dbReference>
<dbReference type="InterPro" id="IPR016461">
    <property type="entry name" value="COMT-like"/>
</dbReference>
<dbReference type="InterPro" id="IPR001077">
    <property type="entry name" value="O_MeTrfase_dom"/>
</dbReference>
<dbReference type="InterPro" id="IPR012967">
    <property type="entry name" value="Plant_O-MeTrfase_dimerisation"/>
</dbReference>
<dbReference type="InterPro" id="IPR029063">
    <property type="entry name" value="SAM-dependent_MTases_sf"/>
</dbReference>
<dbReference type="InterPro" id="IPR036388">
    <property type="entry name" value="WH-like_DNA-bd_sf"/>
</dbReference>
<dbReference type="InterPro" id="IPR036390">
    <property type="entry name" value="WH_DNA-bd_sf"/>
</dbReference>
<dbReference type="PANTHER" id="PTHR11746">
    <property type="entry name" value="O-METHYLTRANSFERASE"/>
    <property type="match status" value="1"/>
</dbReference>
<dbReference type="Pfam" id="PF08100">
    <property type="entry name" value="Dimerisation"/>
    <property type="match status" value="1"/>
</dbReference>
<dbReference type="Pfam" id="PF00891">
    <property type="entry name" value="Methyltransf_2"/>
    <property type="match status" value="1"/>
</dbReference>
<dbReference type="PIRSF" id="PIRSF005739">
    <property type="entry name" value="O-mtase"/>
    <property type="match status" value="1"/>
</dbReference>
<dbReference type="SUPFAM" id="SSF53335">
    <property type="entry name" value="S-adenosyl-L-methionine-dependent methyltransferases"/>
    <property type="match status" value="1"/>
</dbReference>
<dbReference type="SUPFAM" id="SSF46785">
    <property type="entry name" value="Winged helix' DNA-binding domain"/>
    <property type="match status" value="1"/>
</dbReference>
<dbReference type="PROSITE" id="PS51683">
    <property type="entry name" value="SAM_OMT_II"/>
    <property type="match status" value="1"/>
</dbReference>